<organism>
    <name type="scientific">Streptococcus pneumoniae serotype 19F (strain G54)</name>
    <dbReference type="NCBI Taxonomy" id="512566"/>
    <lineage>
        <taxon>Bacteria</taxon>
        <taxon>Bacillati</taxon>
        <taxon>Bacillota</taxon>
        <taxon>Bacilli</taxon>
        <taxon>Lactobacillales</taxon>
        <taxon>Streptococcaceae</taxon>
        <taxon>Streptococcus</taxon>
    </lineage>
</organism>
<proteinExistence type="inferred from homology"/>
<dbReference type="EMBL" id="CP001015">
    <property type="protein sequence ID" value="ACF55531.1"/>
    <property type="molecule type" value="Genomic_DNA"/>
</dbReference>
<dbReference type="SMR" id="B5E5F8"/>
<dbReference type="KEGG" id="spx:SPG_1303"/>
<dbReference type="HOGENOM" id="CLU_071496_1_0_9"/>
<dbReference type="GO" id="GO:0030674">
    <property type="term" value="F:protein-macromolecule adaptor activity"/>
    <property type="evidence" value="ECO:0007669"/>
    <property type="project" value="UniProtKB-UniRule"/>
</dbReference>
<dbReference type="Gene3D" id="3.30.70.1950">
    <property type="match status" value="1"/>
</dbReference>
<dbReference type="HAMAP" id="MF_01124">
    <property type="entry name" value="MecA"/>
    <property type="match status" value="1"/>
</dbReference>
<dbReference type="InterPro" id="IPR038471">
    <property type="entry name" value="MecA_C_sf"/>
</dbReference>
<dbReference type="InterPro" id="IPR008681">
    <property type="entry name" value="Neg-reg_MecA"/>
</dbReference>
<dbReference type="NCBIfam" id="NF002643">
    <property type="entry name" value="PRK02315.1-4"/>
    <property type="match status" value="1"/>
</dbReference>
<dbReference type="PANTHER" id="PTHR39161">
    <property type="entry name" value="ADAPTER PROTEIN MECA"/>
    <property type="match status" value="1"/>
</dbReference>
<dbReference type="PANTHER" id="PTHR39161:SF1">
    <property type="entry name" value="ADAPTER PROTEIN MECA 1"/>
    <property type="match status" value="1"/>
</dbReference>
<dbReference type="Pfam" id="PF05389">
    <property type="entry name" value="MecA"/>
    <property type="match status" value="1"/>
</dbReference>
<dbReference type="PIRSF" id="PIRSF029008">
    <property type="entry name" value="MecA"/>
    <property type="match status" value="1"/>
</dbReference>
<accession>B5E5F8</accession>
<sequence length="245" mass="28409">MKMKQISDTTLKITMSLEDLMDRGMEIADFLVPQEKTEEFFYAILDELEMPDSFLDTGMLSFRVTPKPDKVDVFVTKSKIDQNLDFEDLSDLPDMEELAQMSPDEFIKTLEKSIADKTKDDIEAIQSLEQVEAKEEEQEQAEQEAESKKEPYIYYILSFAKLADLVVFAKTVTFEMETSELYKMNERYYLTILVDIENHPSPYPAWLLARMREFADDSDISRSVLQEYGQVLMSHDAVLNLQKIG</sequence>
<feature type="chain" id="PRO_1000137284" description="Adapter protein MecA">
    <location>
        <begin position="1"/>
        <end position="245"/>
    </location>
</feature>
<comment type="function">
    <text evidence="1">Enables the recognition and targeting of unfolded and aggregated proteins to the ClpC protease or to other proteins involved in proteolysis.</text>
</comment>
<comment type="subunit">
    <text evidence="1">Homodimer.</text>
</comment>
<comment type="domain">
    <text>The N-terminal domain probably binds unfolded/aggregated proteins; the C-terminal domain interacts with ClpC.</text>
</comment>
<comment type="similarity">
    <text evidence="1">Belongs to the MecA family.</text>
</comment>
<reference key="1">
    <citation type="journal article" date="2001" name="Microb. Drug Resist.">
        <title>Annotated draft genomic sequence from a Streptococcus pneumoniae type 19F clinical isolate.</title>
        <authorList>
            <person name="Dopazo J."/>
            <person name="Mendoza A."/>
            <person name="Herrero J."/>
            <person name="Caldara F."/>
            <person name="Humbert Y."/>
            <person name="Friedli L."/>
            <person name="Guerrier M."/>
            <person name="Grand-Schenk E."/>
            <person name="Gandin C."/>
            <person name="de Francesco M."/>
            <person name="Polissi A."/>
            <person name="Buell G."/>
            <person name="Feger G."/>
            <person name="Garcia E."/>
            <person name="Peitsch M."/>
            <person name="Garcia-Bustos J.F."/>
        </authorList>
    </citation>
    <scope>NUCLEOTIDE SEQUENCE [LARGE SCALE GENOMIC DNA]</scope>
    <source>
        <strain>G54</strain>
    </source>
</reference>
<reference key="2">
    <citation type="submission" date="2008-03" db="EMBL/GenBank/DDBJ databases">
        <title>Pneumococcal beta glucoside metabolism investigated by whole genome comparison.</title>
        <authorList>
            <person name="Mulas L."/>
            <person name="Trappetti C."/>
            <person name="Hakenbeck R."/>
            <person name="Iannelli F."/>
            <person name="Pozzi G."/>
            <person name="Davidsen T.M."/>
            <person name="Tettelin H."/>
            <person name="Oggioni M."/>
        </authorList>
    </citation>
    <scope>NUCLEOTIDE SEQUENCE [LARGE SCALE GENOMIC DNA]</scope>
    <source>
        <strain>G54</strain>
    </source>
</reference>
<gene>
    <name evidence="1" type="primary">mecA</name>
    <name type="ordered locus">SPG_1303</name>
</gene>
<protein>
    <recommendedName>
        <fullName evidence="1">Adapter protein MecA</fullName>
    </recommendedName>
</protein>
<name>MECA_STRP4</name>
<evidence type="ECO:0000255" key="1">
    <source>
        <dbReference type="HAMAP-Rule" id="MF_01124"/>
    </source>
</evidence>